<organism>
    <name type="scientific">Arthroderma gypseum (strain ATCC MYA-4604 / CBS 118893)</name>
    <name type="common">Microsporum gypseum</name>
    <dbReference type="NCBI Taxonomy" id="535722"/>
    <lineage>
        <taxon>Eukaryota</taxon>
        <taxon>Fungi</taxon>
        <taxon>Dikarya</taxon>
        <taxon>Ascomycota</taxon>
        <taxon>Pezizomycotina</taxon>
        <taxon>Eurotiomycetes</taxon>
        <taxon>Eurotiomycetidae</taxon>
        <taxon>Onygenales</taxon>
        <taxon>Arthrodermataceae</taxon>
        <taxon>Nannizzia</taxon>
    </lineage>
</organism>
<reference key="1">
    <citation type="journal article" date="2012" name="MBio">
        <title>Comparative genome analysis of Trichophyton rubrum and related dermatophytes reveals candidate genes involved in infection.</title>
        <authorList>
            <person name="Martinez D.A."/>
            <person name="Oliver B.G."/>
            <person name="Graeser Y."/>
            <person name="Goldberg J.M."/>
            <person name="Li W."/>
            <person name="Martinez-Rossi N.M."/>
            <person name="Monod M."/>
            <person name="Shelest E."/>
            <person name="Barton R.C."/>
            <person name="Birch E."/>
            <person name="Brakhage A.A."/>
            <person name="Chen Z."/>
            <person name="Gurr S.J."/>
            <person name="Heiman D."/>
            <person name="Heitman J."/>
            <person name="Kosti I."/>
            <person name="Rossi A."/>
            <person name="Saif S."/>
            <person name="Samalova M."/>
            <person name="Saunders C.W."/>
            <person name="Shea T."/>
            <person name="Summerbell R.C."/>
            <person name="Xu J."/>
            <person name="Young S."/>
            <person name="Zeng Q."/>
            <person name="Birren B.W."/>
            <person name="Cuomo C.A."/>
            <person name="White T.C."/>
        </authorList>
    </citation>
    <scope>NUCLEOTIDE SEQUENCE [LARGE SCALE GENOMIC DNA]</scope>
    <source>
        <strain>ATCC MYA-4604 / CBS 118893</strain>
    </source>
</reference>
<proteinExistence type="inferred from homology"/>
<dbReference type="EC" id="3.4.21.-"/>
<dbReference type="EMBL" id="DS989824">
    <property type="protein sequence ID" value="EFR01590.1"/>
    <property type="molecule type" value="Genomic_DNA"/>
</dbReference>
<dbReference type="RefSeq" id="XP_003174420.1">
    <property type="nucleotide sequence ID" value="XM_003174372.1"/>
</dbReference>
<dbReference type="SMR" id="E4UTU7"/>
<dbReference type="STRING" id="535722.E4UTU7"/>
<dbReference type="GlyCosmos" id="E4UTU7">
    <property type="glycosylation" value="3 sites, No reported glycans"/>
</dbReference>
<dbReference type="GeneID" id="10029714"/>
<dbReference type="VEuPathDB" id="FungiDB:MGYG_04593"/>
<dbReference type="eggNOG" id="KOG1153">
    <property type="taxonomic scope" value="Eukaryota"/>
</dbReference>
<dbReference type="HOGENOM" id="CLU_011263_1_3_1"/>
<dbReference type="InParanoid" id="E4UTU7"/>
<dbReference type="OMA" id="INAPDVW"/>
<dbReference type="OrthoDB" id="206201at2759"/>
<dbReference type="Proteomes" id="UP000002669">
    <property type="component" value="Unassembled WGS sequence"/>
</dbReference>
<dbReference type="GO" id="GO:0005576">
    <property type="term" value="C:extracellular region"/>
    <property type="evidence" value="ECO:0007669"/>
    <property type="project" value="UniProtKB-SubCell"/>
</dbReference>
<dbReference type="GO" id="GO:0004252">
    <property type="term" value="F:serine-type endopeptidase activity"/>
    <property type="evidence" value="ECO:0007669"/>
    <property type="project" value="InterPro"/>
</dbReference>
<dbReference type="GO" id="GO:0006508">
    <property type="term" value="P:proteolysis"/>
    <property type="evidence" value="ECO:0007669"/>
    <property type="project" value="UniProtKB-KW"/>
</dbReference>
<dbReference type="CDD" id="cd04077">
    <property type="entry name" value="Peptidases_S8_PCSK9_ProteinaseK_like"/>
    <property type="match status" value="1"/>
</dbReference>
<dbReference type="FunFam" id="3.40.50.200:FF:000014">
    <property type="entry name" value="Proteinase K"/>
    <property type="match status" value="1"/>
</dbReference>
<dbReference type="Gene3D" id="3.30.70.80">
    <property type="entry name" value="Peptidase S8 propeptide/proteinase inhibitor I9"/>
    <property type="match status" value="1"/>
</dbReference>
<dbReference type="Gene3D" id="3.40.50.200">
    <property type="entry name" value="Peptidase S8/S53 domain"/>
    <property type="match status" value="1"/>
</dbReference>
<dbReference type="InterPro" id="IPR034193">
    <property type="entry name" value="PCSK9_ProteinaseK-like"/>
</dbReference>
<dbReference type="InterPro" id="IPR000209">
    <property type="entry name" value="Peptidase_S8/S53_dom"/>
</dbReference>
<dbReference type="InterPro" id="IPR036852">
    <property type="entry name" value="Peptidase_S8/S53_dom_sf"/>
</dbReference>
<dbReference type="InterPro" id="IPR023828">
    <property type="entry name" value="Peptidase_S8_Ser-AS"/>
</dbReference>
<dbReference type="InterPro" id="IPR050131">
    <property type="entry name" value="Peptidase_S8_subtilisin-like"/>
</dbReference>
<dbReference type="InterPro" id="IPR015500">
    <property type="entry name" value="Peptidase_S8_subtilisin-rel"/>
</dbReference>
<dbReference type="InterPro" id="IPR010259">
    <property type="entry name" value="S8pro/Inhibitor_I9"/>
</dbReference>
<dbReference type="InterPro" id="IPR037045">
    <property type="entry name" value="S8pro/Inhibitor_I9_sf"/>
</dbReference>
<dbReference type="PANTHER" id="PTHR43806:SF11">
    <property type="entry name" value="CEREVISIN-RELATED"/>
    <property type="match status" value="1"/>
</dbReference>
<dbReference type="PANTHER" id="PTHR43806">
    <property type="entry name" value="PEPTIDASE S8"/>
    <property type="match status" value="1"/>
</dbReference>
<dbReference type="Pfam" id="PF05922">
    <property type="entry name" value="Inhibitor_I9"/>
    <property type="match status" value="1"/>
</dbReference>
<dbReference type="Pfam" id="PF00082">
    <property type="entry name" value="Peptidase_S8"/>
    <property type="match status" value="1"/>
</dbReference>
<dbReference type="PRINTS" id="PR00723">
    <property type="entry name" value="SUBTILISIN"/>
</dbReference>
<dbReference type="SUPFAM" id="SSF54897">
    <property type="entry name" value="Protease propeptides/inhibitors"/>
    <property type="match status" value="1"/>
</dbReference>
<dbReference type="SUPFAM" id="SSF52743">
    <property type="entry name" value="Subtilisin-like"/>
    <property type="match status" value="1"/>
</dbReference>
<dbReference type="PROSITE" id="PS51892">
    <property type="entry name" value="SUBTILASE"/>
    <property type="match status" value="1"/>
</dbReference>
<dbReference type="PROSITE" id="PS00138">
    <property type="entry name" value="SUBTILASE_SER"/>
    <property type="match status" value="1"/>
</dbReference>
<comment type="function">
    <text evidence="1">Secreted subtilisin-like serine protease with keratinolytic activity that contributes to pathogenicity.</text>
</comment>
<comment type="subcellular location">
    <subcellularLocation>
        <location evidence="1">Secreted</location>
    </subcellularLocation>
</comment>
<comment type="similarity">
    <text evidence="4">Belongs to the peptidase S8 family.</text>
</comment>
<protein>
    <recommendedName>
        <fullName>Subtilisin-like protease 9</fullName>
        <ecNumber>3.4.21.-</ecNumber>
    </recommendedName>
</protein>
<name>SUB9_ARTGP</name>
<sequence>MGFFRILFSLSLCALSLAIPSKLIGLENTKDVIPNSYIVVMKSAVSEAEFQSHQAWASKIHSRSLGKRDGVLDDFGGLKATFQFEGLKGYSGAFDKKTIELITRNPAVDYVEVDRVVKLDAISTQRDAPSWGLGRISHRRVGSADYVFDDSAGSGITIYGVDTGIDIRHPEFGGRAAWGTNTVDDEDTDQNGHGTHTAGTFGGATYGIAKKANIVAVKVLNAQGTGTTSGVIQGIQWCTDHAGRNGLRGKAAMNLSLGIRGSTIFNRVAEAAQASGIFLAVAAGNDGTDAGQFSPASARGVCTAAATNSQDAATSWSNYGSVVAVYGPGADIVSAYPNDDTATLSGTSMASPHVCGVGAYLMALEGIGPDTVCDRIKQLASESVTNQKPNTTKKLLYNGSGA</sequence>
<evidence type="ECO:0000250" key="1"/>
<evidence type="ECO:0000255" key="2"/>
<evidence type="ECO:0000255" key="3">
    <source>
        <dbReference type="PROSITE-ProRule" id="PRU01240"/>
    </source>
</evidence>
<evidence type="ECO:0000305" key="4"/>
<accession>E4UTU7</accession>
<keyword id="KW-0325">Glycoprotein</keyword>
<keyword id="KW-0378">Hydrolase</keyword>
<keyword id="KW-0645">Protease</keyword>
<keyword id="KW-1185">Reference proteome</keyword>
<keyword id="KW-0964">Secreted</keyword>
<keyword id="KW-0720">Serine protease</keyword>
<keyword id="KW-0732">Signal</keyword>
<keyword id="KW-0843">Virulence</keyword>
<keyword id="KW-0865">Zymogen</keyword>
<gene>
    <name type="primary">SUB9</name>
    <name type="ORF">MGYG_04593</name>
</gene>
<feature type="signal peptide" evidence="2">
    <location>
        <begin position="1"/>
        <end position="18"/>
    </location>
</feature>
<feature type="propeptide" id="PRO_0000406386" evidence="1">
    <location>
        <begin position="19"/>
        <end position="120"/>
    </location>
</feature>
<feature type="chain" id="PRO_0000406387" description="Subtilisin-like protease 9">
    <location>
        <begin position="121"/>
        <end position="402"/>
    </location>
</feature>
<feature type="domain" description="Inhibitor I9" evidence="2">
    <location>
        <begin position="36"/>
        <end position="119"/>
    </location>
</feature>
<feature type="domain" description="Peptidase S8" evidence="3">
    <location>
        <begin position="130"/>
        <end position="402"/>
    </location>
</feature>
<feature type="active site" description="Charge relay system" evidence="3">
    <location>
        <position position="162"/>
    </location>
</feature>
<feature type="active site" description="Charge relay system" evidence="3">
    <location>
        <position position="193"/>
    </location>
</feature>
<feature type="active site" description="Charge relay system" evidence="3">
    <location>
        <position position="348"/>
    </location>
</feature>
<feature type="glycosylation site" description="N-linked (GlcNAc...) asparagine" evidence="2">
    <location>
        <position position="254"/>
    </location>
</feature>
<feature type="glycosylation site" description="N-linked (GlcNAc...) asparagine" evidence="2">
    <location>
        <position position="390"/>
    </location>
</feature>
<feature type="glycosylation site" description="N-linked (GlcNAc...) asparagine" evidence="2">
    <location>
        <position position="398"/>
    </location>
</feature>